<protein>
    <recommendedName>
        <fullName evidence="32">AP-1-like transcription factor YAP1</fullName>
    </recommendedName>
    <alternativeName>
        <fullName evidence="29">Phenanthroline resistance protein PAR1</fullName>
    </alternativeName>
    <alternativeName>
        <fullName evidence="30">Pleiotropic drug resistance protein PDR4</fullName>
    </alternativeName>
</protein>
<keyword id="KW-0002">3D-structure</keyword>
<keyword id="KW-0010">Activator</keyword>
<keyword id="KW-0105">Cadmium resistance</keyword>
<keyword id="KW-0963">Cytoplasm</keyword>
<keyword id="KW-1015">Disulfide bond</keyword>
<keyword id="KW-0238">DNA-binding</keyword>
<keyword id="KW-0539">Nucleus</keyword>
<keyword id="KW-0558">Oxidation</keyword>
<keyword id="KW-0597">Phosphoprotein</keyword>
<keyword id="KW-1185">Reference proteome</keyword>
<keyword id="KW-0677">Repeat</keyword>
<keyword id="KW-0804">Transcription</keyword>
<keyword id="KW-0805">Transcription regulation</keyword>
<comment type="function">
    <text evidence="5 6 7 8 9 10 11 12 13 14 16 21 22 23 25 26 27">Transcription activator involved in oxidative stress response and redox homeostasis. Regulates the transcription of genes encoding antioxidant enzymes and components of the cellular thiol-reducing pathways, including the thioredoxin system (TRX2, TRR1), the glutaredoxin system (GSH1, GLR1), superoxide dismutase (SOD1, SOD2), glutathione peroxidase (GPX2), and thiol-specific peroxidases (TSA1, AHP1). The induction of some of these genes requires the cooperative action of both, YAP1 and SKN7. Preferentially binds to promoters with the core binding site 5'-TTA[CG]TAA-3'. Activity of the transcription factor is controlled through oxidation of specific cysteine residues resulting in the alteration of its subcellular location. Oxidative stress (as well as carbon stress, but not increased temperature, acidic pH, or ionic stress) induces nuclear accumulation and as a result YAP1 transcriptional activity. Activation by hydrogen peroxide or thiol-reactive chemicals elicit distinct adaptive gene responses. Nuclear export is restored when disulfide bonds are reduced by thioredoxin (TRX2), whose expression is controlled by YAP1, providing a mechanism for negative autoregulation. When overexpressed, YAP1 confers pleiotropic drug-resistance and increases cellular tolerance to cadmium, iron chelators and zinc.</text>
</comment>
<comment type="subunit">
    <text evidence="1 7 12 20">Interacts independent of oxidation state in the cytoplasm with the karyopherin PSE1/KAP121 (and less strongly with KAP123). The reduced form of YAP1 interacts in the nucleus with the nuclear export protein CRM1, and in the cytoplasm with YBP1 and the peroxiredoxin HYR1/GPX3/ORP1. Interacts with RBG1.</text>
</comment>
<comment type="interaction">
    <interactant intactId="EBI-31265">
        <id>P19880</id>
    </interactant>
    <interactant intactId="EBI-3968">
        <id>P25296</id>
        <label>CNB1</label>
    </interactant>
    <organismsDiffer>false</organismsDiffer>
    <experiments>2</experiments>
</comment>
<comment type="interaction">
    <interactant intactId="EBI-31265">
        <id>P19880</id>
    </interactant>
    <interactant intactId="EBI-20985">
        <id>P38315</id>
        <label>YBP1</label>
    </interactant>
    <organismsDiffer>false</organismsDiffer>
    <experiments>3</experiments>
</comment>
<comment type="subcellular location">
    <subcellularLocation>
        <location evidence="7 24 27">Nucleus</location>
    </subcellularLocation>
    <subcellularLocation>
        <location evidence="7 24 27">Cytoplasm</location>
    </subcellularLocation>
    <text evidence="7 24 27">Oxidized YAP1 is found predominantly in the nucleus, while reduced YAP1 is continuously exported to the cytoplasm by CRM1/exportin 1. Nuclear import requires the karyopherin PSE1/KAP121 and is independent on YAP1 oxidation state.</text>
</comment>
<comment type="induction">
    <text evidence="26">YAP1 expression is at least partially regulated at the level of translation. A small upstream open reading frame (uORF) retains the 40S ribosomal subunit. By leaky scanning it then proceeds and reinitiates at the functional YAP1 ORF.</text>
</comment>
<comment type="domain">
    <text evidence="14 17 21">Contains two cysteine rich domains (CRD), referred to as the N- and C-terminal CRD's, n-CRD (Cys-303, Cys-310 and Cys-315) and c-CRD (Cys-598, Cys-620 and Cys-629), respectively. Cys-315 is not conserved in orthologs in other yeast species. A nuclear export signal is embedded in the c-CRD, with which the nuclear export protein CRM1/exportin 1 interacts only in the absence of disulfide bonds (or otherwise oxidized cysteines) within the c-CRD or between the c-CRD and the n-CRD.</text>
</comment>
<comment type="PTM">
    <text evidence="10 13 14 18 33">Depending on the oxidative stress inducing agent, YAP1 can undergo two distinct conformational changes, both involving disulfide bond formation, and both masking the nuclear export signal, thus abolishing nuclear export by CRM1/exportin 1. The disulfide stress-inducing agent diamide leads to the formation of one of three possible disulfide bonds in the c-CRD. Peroxide stress induces the formation of the HYR1/GPX3- and YBP1-dependent interdomain disulfide bond between Cys-303 and Cys-598 (causing nuclear localization of YAP1), and the possibly stabilizing bond between Cys-310 and Cys-629 (required for full activity of YAP1).</text>
</comment>
<comment type="miscellaneous">
    <text evidence="35">One of 8 closely related fungi-specific YAP proteins (YAP1 to YAP8), which all seem to be transcription activators of the environmental stress response and metabolism control pathways and to have similar but not identical DNA binding specificities.</text>
</comment>
<comment type="miscellaneous">
    <text evidence="15">Present with 1600 molecules/cell in log phase SD medium.</text>
</comment>
<comment type="similarity">
    <text evidence="32">Belongs to the bZIP family. YAP subfamily.</text>
</comment>
<comment type="sequence caution" evidence="32">
    <conflict type="frameshift">
        <sequence resource="EMBL-CDS" id="CAA37827"/>
    </conflict>
</comment>
<feature type="chain" id="PRO_0000076521" description="AP-1-like transcription factor YAP1">
    <location>
        <begin position="1"/>
        <end position="650"/>
    </location>
</feature>
<feature type="domain" description="bZIP" evidence="3">
    <location>
        <begin position="64"/>
        <end position="127"/>
    </location>
</feature>
<feature type="region of interest" description="Disordered" evidence="4">
    <location>
        <begin position="1"/>
        <end position="89"/>
    </location>
</feature>
<feature type="region of interest" description="Basic motif" evidence="3">
    <location>
        <begin position="67"/>
        <end position="90"/>
    </location>
</feature>
<feature type="region of interest" description="Leucine-zipper" evidence="3">
    <location>
        <begin position="92"/>
        <end position="120"/>
    </location>
</feature>
<feature type="region of interest" description="Disordered" evidence="4">
    <location>
        <begin position="149"/>
        <end position="169"/>
    </location>
</feature>
<feature type="region of interest" description="Disordered" evidence="4">
    <location>
        <begin position="183"/>
        <end position="251"/>
    </location>
</feature>
<feature type="region of interest" description="Transcription activation 1" evidence="22">
    <location>
        <begin position="220"/>
        <end position="378"/>
    </location>
</feature>
<feature type="region of interest" description="n-CRD" evidence="34">
    <location>
        <begin position="303"/>
        <end position="315"/>
    </location>
</feature>
<feature type="region of interest" description="Disordered" evidence="4">
    <location>
        <begin position="392"/>
        <end position="419"/>
    </location>
</feature>
<feature type="region of interest" description="Transcription activation 2" evidence="22">
    <location>
        <begin position="430"/>
        <end position="537"/>
    </location>
</feature>
<feature type="region of interest" description="Disordered" evidence="4">
    <location>
        <begin position="510"/>
        <end position="532"/>
    </location>
</feature>
<feature type="region of interest" description="Disordered" evidence="4">
    <location>
        <begin position="551"/>
        <end position="591"/>
    </location>
</feature>
<feature type="region of interest" description="c-CRD" evidence="34">
    <location>
        <begin position="598"/>
        <end position="629"/>
    </location>
</feature>
<feature type="short sequence motif" description="Bipartite nuclear localization signal" evidence="2">
    <location>
        <begin position="35"/>
        <end position="42"/>
    </location>
</feature>
<feature type="short sequence motif" description="Bipartite nuclear localization signal" evidence="2">
    <location>
        <begin position="68"/>
        <end position="75"/>
    </location>
</feature>
<feature type="short sequence motif" description="Nuclear export signal" evidence="36">
    <location>
        <begin position="614"/>
        <end position="621"/>
    </location>
</feature>
<feature type="compositionally biased region" description="Basic and acidic residues" evidence="4">
    <location>
        <begin position="22"/>
        <end position="50"/>
    </location>
</feature>
<feature type="compositionally biased region" description="Basic and acidic residues" evidence="4">
    <location>
        <begin position="58"/>
        <end position="68"/>
    </location>
</feature>
<feature type="compositionally biased region" description="Basic and acidic residues" evidence="4">
    <location>
        <begin position="80"/>
        <end position="89"/>
    </location>
</feature>
<feature type="compositionally biased region" description="Polar residues" evidence="4">
    <location>
        <begin position="150"/>
        <end position="162"/>
    </location>
</feature>
<feature type="compositionally biased region" description="Polar residues" evidence="4">
    <location>
        <begin position="195"/>
        <end position="209"/>
    </location>
</feature>
<feature type="compositionally biased region" description="Low complexity" evidence="4">
    <location>
        <begin position="226"/>
        <end position="246"/>
    </location>
</feature>
<feature type="compositionally biased region" description="Low complexity" evidence="4">
    <location>
        <begin position="392"/>
        <end position="414"/>
    </location>
</feature>
<feature type="compositionally biased region" description="Polar residues" evidence="4">
    <location>
        <begin position="551"/>
        <end position="570"/>
    </location>
</feature>
<feature type="compositionally biased region" description="Low complexity" evidence="4">
    <location>
        <begin position="571"/>
        <end position="580"/>
    </location>
</feature>
<feature type="modified residue" description="Phosphoserine" evidence="42">
    <location>
        <position position="9"/>
    </location>
</feature>
<feature type="modified residue" description="Phosphoserine" evidence="39 40 42">
    <location>
        <position position="14"/>
    </location>
</feature>
<feature type="modified residue" description="Phosphoserine" evidence="42">
    <location>
        <position position="17"/>
    </location>
</feature>
<feature type="modified residue" description="Phosphothreonine" evidence="42">
    <location>
        <position position="165"/>
    </location>
</feature>
<feature type="modified residue" description="Phosphoserine" evidence="42">
    <location>
        <position position="204"/>
    </location>
</feature>
<feature type="modified residue" description="Phosphoserine" evidence="41">
    <location>
        <position position="372"/>
    </location>
</feature>
<feature type="modified residue" description="Phosphoserine" evidence="40 41 42">
    <location>
        <position position="528"/>
    </location>
</feature>
<feature type="disulfide bond" description="In peroxide stress-induced nuclear retained form; alternate" evidence="10 13 17 18 38">
    <location>
        <begin position="303"/>
        <end position="598"/>
    </location>
</feature>
<feature type="disulfide bond" description="In peroxide stress-induced nuclear retained form; alternate" evidence="13 17 18 38">
    <location>
        <begin position="310"/>
        <end position="629"/>
    </location>
</feature>
<feature type="disulfide bond" description="In diamide-induced nuclear retained form; alternate" evidence="8">
    <location>
        <begin position="598"/>
        <end position="629"/>
    </location>
</feature>
<feature type="disulfide bond" description="In diamide-induced nuclear retained form" evidence="8">
    <location>
        <begin position="598"/>
        <end position="620"/>
    </location>
</feature>
<feature type="disulfide bond" description="Interchain (with C-36 in HYR1); transient; alternate" evidence="10 13 19">
    <location>
        <position position="598"/>
    </location>
</feature>
<feature type="disulfide bond" description="In diamide-induced nuclear retained form" evidence="8">
    <location>
        <begin position="620"/>
        <end position="629"/>
    </location>
</feature>
<feature type="mutagenesis site" description="Dominant negative transcription activator." evidence="22">
    <original>Q</original>
    <variation>A</variation>
    <location>
        <position position="78"/>
    </location>
</feature>
<feature type="mutagenesis site" description="Does not alter nuclear location and transcription activation. Constitutively cytoplasmic; when associated with A-620 and T-629." evidence="24">
    <original>C</original>
    <variation>T</variation>
    <location>
        <position position="598"/>
    </location>
</feature>
<feature type="mutagenesis site" description="Does not alter nuclear location and transcription activation. Constitutively cytoplasmic; when associated with T-598 and T-629." evidence="24">
    <original>C</original>
    <variation>A</variation>
    <location>
        <position position="620"/>
    </location>
</feature>
<feature type="mutagenesis site" description="Constitutive nuclear location and transcription activation." evidence="24">
    <original>C</original>
    <variation>T</variation>
    <location>
        <position position="620"/>
    </location>
</feature>
<feature type="mutagenesis site" description="Does not alter nuclear location and transcription activation. Constitutively cytoplasmic; when associated with T-598 and T-620." evidence="24">
    <original>C</original>
    <variation>T</variation>
    <location>
        <position position="629"/>
    </location>
</feature>
<feature type="sequence conflict" description="In Ref. 4; CAA43195." evidence="32" ref="4">
    <original>P</original>
    <variation>S</variation>
    <location>
        <position position="316"/>
    </location>
</feature>
<feature type="sequence conflict" description="In Ref. 1; CAA41536." evidence="32" ref="1">
    <original>D</original>
    <variation>E</variation>
    <location>
        <position position="586"/>
    </location>
</feature>
<feature type="sequence conflict" description="In Ref. 2; CAA37827." evidence="32" ref="2">
    <original>H</original>
    <variation>D</variation>
    <location>
        <position position="648"/>
    </location>
</feature>
<feature type="helix" evidence="43">
    <location>
        <begin position="289"/>
        <end position="291"/>
    </location>
</feature>
<feature type="strand" evidence="43">
    <location>
        <begin position="292"/>
        <end position="294"/>
    </location>
</feature>
<feature type="strand" evidence="43">
    <location>
        <begin position="298"/>
        <end position="300"/>
    </location>
</feature>
<feature type="helix" evidence="43">
    <location>
        <begin position="301"/>
        <end position="308"/>
    </location>
</feature>
<feature type="helix" evidence="43">
    <location>
        <begin position="598"/>
        <end position="606"/>
    </location>
</feature>
<feature type="helix" evidence="43">
    <location>
        <begin position="616"/>
        <end position="623"/>
    </location>
</feature>
<feature type="turn" evidence="43">
    <location>
        <begin position="624"/>
        <end position="626"/>
    </location>
</feature>
<feature type="helix" evidence="43">
    <location>
        <begin position="638"/>
        <end position="646"/>
    </location>
</feature>
<reference key="1">
    <citation type="journal article" date="1989" name="Genes Dev.">
        <title>Yeast YAP1 encodes a novel form of the jun family of transcriptional activator proteins.</title>
        <authorList>
            <person name="Moye-Rowley W.S."/>
            <person name="Harshman K.D."/>
            <person name="Parker C.S."/>
        </authorList>
    </citation>
    <scope>NUCLEOTIDE SEQUENCE [GENOMIC DNA]</scope>
</reference>
<reference key="2">
    <citation type="journal article" date="1991" name="Gene">
        <title>Characterization of PDR4, a Saccharomyces cerevisiae gene that confers pleiotropic drug resistance in high-copy number: identity with YAP1, encoding a transcriptional activator.</title>
        <authorList>
            <person name="Hussain M."/>
            <person name="Lenard J."/>
        </authorList>
    </citation>
    <scope>NUCLEOTIDE SEQUENCE [GENOMIC DNA]</scope>
</reference>
<reference key="3">
    <citation type="journal article" date="1991" name="Curr. Genet.">
        <title>The SNQ3 gene of Saccharomyces cerevisiae confers hyper-resistance to several functionally unrelated chemicals.</title>
        <authorList>
            <person name="Hertle K."/>
            <person name="Haase E."/>
            <person name="Brendel M."/>
        </authorList>
    </citation>
    <scope>NUCLEOTIDE SEQUENCE [GENOMIC DNA]</scope>
</reference>
<reference key="4">
    <citation type="journal article" date="1991" name="Eur. J. Biochem.">
        <title>Identification and characterization of a Saccharomyces cerevisiae gene (PAR1) conferring resistance to iron chelators.</title>
        <authorList>
            <person name="Schnell N."/>
            <person name="Entian K.-D."/>
        </authorList>
    </citation>
    <scope>NUCLEOTIDE SEQUENCE [GENOMIC DNA]</scope>
</reference>
<reference key="5">
    <citation type="journal article" date="1997" name="Nature">
        <title>The nucleotide sequence of Saccharomyces cerevisiae chromosome XIII.</title>
        <authorList>
            <person name="Bowman S."/>
            <person name="Churcher C.M."/>
            <person name="Badcock K."/>
            <person name="Brown D."/>
            <person name="Chillingworth T."/>
            <person name="Connor R."/>
            <person name="Dedman K."/>
            <person name="Devlin K."/>
            <person name="Gentles S."/>
            <person name="Hamlin N."/>
            <person name="Hunt S."/>
            <person name="Jagels K."/>
            <person name="Lye G."/>
            <person name="Moule S."/>
            <person name="Odell C."/>
            <person name="Pearson D."/>
            <person name="Rajandream M.A."/>
            <person name="Rice P."/>
            <person name="Skelton J."/>
            <person name="Walsh S.V."/>
            <person name="Whitehead S."/>
            <person name="Barrell B.G."/>
        </authorList>
    </citation>
    <scope>NUCLEOTIDE SEQUENCE [LARGE SCALE GENOMIC DNA]</scope>
    <source>
        <strain>ATCC 204508 / S288c</strain>
    </source>
</reference>
<reference key="6">
    <citation type="journal article" date="2014" name="G3 (Bethesda)">
        <title>The reference genome sequence of Saccharomyces cerevisiae: Then and now.</title>
        <authorList>
            <person name="Engel S.R."/>
            <person name="Dietrich F.S."/>
            <person name="Fisk D.G."/>
            <person name="Binkley G."/>
            <person name="Balakrishnan R."/>
            <person name="Costanzo M.C."/>
            <person name="Dwight S.S."/>
            <person name="Hitz B.C."/>
            <person name="Karra K."/>
            <person name="Nash R.S."/>
            <person name="Weng S."/>
            <person name="Wong E.D."/>
            <person name="Lloyd P."/>
            <person name="Skrzypek M.S."/>
            <person name="Miyasato S.R."/>
            <person name="Simison M."/>
            <person name="Cherry J.M."/>
        </authorList>
    </citation>
    <scope>GENOME REANNOTATION</scope>
    <source>
        <strain>ATCC 204508 / S288c</strain>
    </source>
</reference>
<reference key="7">
    <citation type="journal article" date="1992" name="Curr. Genet.">
        <title>The PAR1 (YAP1/SNQ3) gene of Saccharomyces cerevisiae, a c-jun homologue, is involved in oxygen metabolism.</title>
        <authorList>
            <person name="Schnell N."/>
            <person name="Krems B."/>
            <person name="Entian K.-D."/>
        </authorList>
    </citation>
    <scope>FUNCTION</scope>
</reference>
<reference key="8">
    <citation type="journal article" date="1994" name="J. Biol. Chem.">
        <title>Transcriptional activation mediated by the yeast AP-1 protein is required for normal cadmium tolerance.</title>
        <authorList>
            <person name="Wemmie J.A."/>
            <person name="Wu A.L."/>
            <person name="Harshman K.D."/>
            <person name="Parker C.S."/>
            <person name="Moye-Rowley W.S."/>
        </authorList>
    </citation>
    <scope>FUNCTION</scope>
    <scope>MUTAGENESIS OF GLN-78</scope>
</reference>
<reference key="9">
    <citation type="journal article" date="1997" name="EMBO J.">
        <title>Regulation of yAP-1 nuclear localization in response to oxidative stress.</title>
        <authorList>
            <person name="Kuge S."/>
            <person name="Jones N."/>
            <person name="Nomoto A."/>
        </authorList>
    </citation>
    <scope>MUTAGENESIS OF CYS-598; CYS-620 AND CYS-629</scope>
    <scope>SUBCELLULAR LOCATION</scope>
</reference>
<reference key="10">
    <citation type="journal article" date="1997" name="J. Biol. Chem.">
        <title>The Saccharomyces cerevisiae AP-1 protein discriminates between oxidative stress elicited by the oxidants H2O2 and diamide.</title>
        <authorList>
            <person name="Wemmie J.A."/>
            <person name="Steggerda S.M."/>
            <person name="Moye-Rowley W.S."/>
        </authorList>
    </citation>
    <scope>FUNCTION</scope>
</reference>
<reference key="11">
    <citation type="journal article" date="1997" name="Mol. Cell. Biol.">
        <title>Yap, a novel family of eight bZIP proteins in Saccharomyces cerevisiae with distinct biological functions.</title>
        <authorList>
            <person name="Fernandes L."/>
            <person name="Rodrigues-Pousada C."/>
            <person name="Struhl K."/>
        </authorList>
    </citation>
    <scope>FUNCTION</scope>
    <scope>DNA-BINDING</scope>
</reference>
<reference key="12">
    <citation type="journal article" date="1998" name="EMBO J.">
        <title>Crm1p mediates regulated nuclear export of a yeast AP-1-like transcription factor.</title>
        <authorList>
            <person name="Yan C."/>
            <person name="Lee L.H."/>
            <person name="Davis L.I."/>
        </authorList>
    </citation>
    <scope>FUNCTION</scope>
    <scope>NUCLEAR EXPORT BY CRM1</scope>
    <scope>NUCLEAR EXPORT SIGNAL</scope>
</reference>
<reference key="13">
    <citation type="journal article" date="1998" name="Nucleic Acids Res.">
        <title>The yeast transcription factor genes YAP1 and YAP2 are subject to differential control at the levels of both translation and mRNA stability.</title>
        <authorList>
            <person name="Vilela C."/>
            <person name="Linz B."/>
            <person name="Rodrigues-Pousada C."/>
            <person name="McCarthy J.E."/>
        </authorList>
    </citation>
    <scope>FUNCTION</scope>
    <scope>POST-TRANSCRIPTIONAL EXPRESSION CONTROL</scope>
</reference>
<reference key="14">
    <citation type="journal article" date="1999" name="J. Biol. Chem.">
        <title>Yap1 and Skn7 control two specialized oxidative stress response regulons in yeast.</title>
        <authorList>
            <person name="Lee J."/>
            <person name="Godon C."/>
            <person name="Lagniel G."/>
            <person name="Spector D."/>
            <person name="Garin J."/>
            <person name="Labarre J."/>
            <person name="Toledano M.B."/>
        </authorList>
    </citation>
    <scope>FUNCTION</scope>
    <scope>COOPERATIVITY WITH SKN7</scope>
    <scope>YAP1 DEPENDENT GENES</scope>
</reference>
<reference key="15">
    <citation type="journal article" date="2000" name="EMBO J.">
        <title>H2O2 sensing through oxidation of the Yap1 transcription factor.</title>
        <authorList>
            <person name="Delaunay A."/>
            <person name="Isnard A.D."/>
            <person name="Toledano M.B."/>
        </authorList>
    </citation>
    <scope>FUNCTION</scope>
    <scope>REDUCTION BY THIOREDOXINS</scope>
</reference>
<reference key="16">
    <citation type="journal article" date="2000" name="Mol. Biol. Cell">
        <title>Genomic expression programs in the response of yeast cells to environmental changes.</title>
        <authorList>
            <person name="Gasch A.P."/>
            <person name="Spellman P.T."/>
            <person name="Kao C.M."/>
            <person name="Carmel-Harel O."/>
            <person name="Eisen M.B."/>
            <person name="Storz G."/>
            <person name="Botstein D."/>
            <person name="Brown P.O."/>
        </authorList>
    </citation>
    <scope>TRANSCRIPTION PROFILING</scope>
</reference>
<reference key="17">
    <citation type="journal article" date="2000" name="Mol. Microbiol.">
        <title>A large-scale study of Yap1p-dependent genes in normal aerobic and H2O2-stress conditions: the role of Yap1p in cell proliferation control in yeast.</title>
        <authorList>
            <person name="Dumond H."/>
            <person name="Danielou N."/>
            <person name="Pinto M."/>
            <person name="Bolotin-Fukuhara M."/>
        </authorList>
    </citation>
    <scope>TRANSCRIPTION PROFILING</scope>
</reference>
<reference key="18">
    <citation type="journal article" date="2001" name="J. Biol. Chem.">
        <title>Nuclear import of the yeast AP-1-like transcription factor Yap1p is mediated by transport receptor Pse1p, and this import step is not affected by oxidative stress.</title>
        <authorList>
            <person name="Isoyama T."/>
            <person name="Murayama A."/>
            <person name="Nomoto A."/>
            <person name="Kuge S."/>
        </authorList>
    </citation>
    <scope>FUNCTION</scope>
    <scope>NUCLEAR IMPORT</scope>
    <scope>INTERACTION WITH PSE1</scope>
</reference>
<reference key="19">
    <citation type="journal article" date="2001" name="Mol. Cell. Biol.">
        <title>Regulation of the yeast Yap1p nuclear export signal is mediated by redox signal-induced reversible disulfide bond formation.</title>
        <authorList>
            <person name="Kuge S."/>
            <person name="Arita M."/>
            <person name="Murayama A."/>
            <person name="Maeta K."/>
            <person name="Izawa S."/>
            <person name="Inoue Y."/>
            <person name="Nomoto A."/>
        </authorList>
    </citation>
    <scope>FUNCTION</scope>
    <scope>SUBCELLULAR LOCATION</scope>
</reference>
<reference key="20">
    <citation type="journal article" date="2002" name="Cell">
        <title>A thiol peroxidase is an H2O2 receptor and redox-transducer in gene activation.</title>
        <authorList>
            <person name="Delaunay A."/>
            <person name="Pflieger D."/>
            <person name="Barrault M.-B."/>
            <person name="Vinh J."/>
            <person name="Toledano M.B."/>
        </authorList>
    </citation>
    <scope>FUNCTION</scope>
    <scope>OXIDATION BY HYR1/GPX3</scope>
</reference>
<reference key="21">
    <citation type="journal article" date="2002" name="Mol. Biol. Cell">
        <title>Discrimination between paralogs using microarray analysis: application to the Yap1p and Yap2p transcriptional networks.</title>
        <authorList>
            <person name="Cohen B.A."/>
            <person name="Pilpel Y."/>
            <person name="Mitra R.D."/>
            <person name="Church G.M."/>
        </authorList>
    </citation>
    <scope>TRANSCRIPTION PROFILING</scope>
</reference>
<reference key="22">
    <citation type="journal article" date="2003" name="Biochemistry">
        <title>The redox domain of the Yap1p transcription factor contains two disulfide bonds.</title>
        <authorList>
            <person name="Wood M.J."/>
            <person name="Andrade E.C."/>
            <person name="Storz G."/>
        </authorList>
    </citation>
    <scope>FUNCTION</scope>
    <scope>OXIDATION</scope>
    <scope>DISULFIDE BONDS</scope>
</reference>
<reference key="23">
    <citation type="journal article" date="2003" name="Eukaryot. Cell">
        <title>Yap1 accumulates in the nucleus in response to carbon stress in Saccharomyces cerevisiae.</title>
        <authorList>
            <person name="Wiatrowski H.A."/>
            <person name="Carlson M."/>
        </authorList>
    </citation>
    <scope>FUNCTION</scope>
</reference>
<reference key="24">
    <citation type="journal article" date="2003" name="Free Radic. Biol. Med.">
        <title>Two redox centers within Yap1 for H2O2 and thiol-reactive chemicals signaling.</title>
        <authorList>
            <person name="Azevedo D."/>
            <person name="Tacnet F."/>
            <person name="Delaunay A."/>
            <person name="Rodrigues-Pousada C."/>
            <person name="Toledano M.B."/>
        </authorList>
    </citation>
    <scope>FUNCTION</scope>
    <scope>ELICITOR SPECIFIC DISULFIDE BONDS</scope>
</reference>
<reference key="25">
    <citation type="journal article" date="2003" name="J. Biol. Chem.">
        <title>Ybp1 is required for the hydrogen peroxide-induced oxidation of the Yap1 transcription factor.</title>
        <authorList>
            <person name="Veal E.A."/>
            <person name="Ross S.J."/>
            <person name="Malakasi P."/>
            <person name="Peacock E."/>
            <person name="Morgan B.A."/>
        </authorList>
    </citation>
    <scope>FUNCTION</scope>
    <scope>INTERACTION WITH YBP1</scope>
</reference>
<reference key="26">
    <citation type="journal article" date="2003" name="Nature">
        <title>Global analysis of protein expression in yeast.</title>
        <authorList>
            <person name="Ghaemmaghami S."/>
            <person name="Huh W.-K."/>
            <person name="Bower K."/>
            <person name="Howson R.W."/>
            <person name="Belle A."/>
            <person name="Dephoure N."/>
            <person name="O'Shea E.K."/>
            <person name="Weissman J.S."/>
        </authorList>
    </citation>
    <scope>LEVEL OF PROTEIN EXPRESSION [LARGE SCALE ANALYSIS]</scope>
</reference>
<reference key="27">
    <citation type="journal article" date="2005" name="Mol. Cell. Proteomics">
        <title>Quantitative phosphoproteomics applied to the yeast pheromone signaling pathway.</title>
        <authorList>
            <person name="Gruhler A."/>
            <person name="Olsen J.V."/>
            <person name="Mohammed S."/>
            <person name="Mortensen P."/>
            <person name="Faergeman N.J."/>
            <person name="Mann M."/>
            <person name="Jensen O.N."/>
        </authorList>
    </citation>
    <scope>PHOSPHORYLATION [LARGE SCALE ANALYSIS] AT SER-14</scope>
    <scope>IDENTIFICATION BY MASS SPECTROMETRY [LARGE SCALE ANALYSIS]</scope>
    <source>
        <strain>YAL6B</strain>
    </source>
</reference>
<reference key="28">
    <citation type="journal article" date="2007" name="J. Biol. Chem.">
        <title>Molecular mechanism of oxidative stress perception by the Orp1 protein.</title>
        <authorList>
            <person name="Ma L.H."/>
            <person name="Takanishi C.L."/>
            <person name="Wood M.J."/>
        </authorList>
    </citation>
    <scope>DISULFIDE BOND WITH HYR1</scope>
</reference>
<reference key="29">
    <citation type="journal article" date="2007" name="J. Proteome Res.">
        <title>Large-scale phosphorylation analysis of alpha-factor-arrested Saccharomyces cerevisiae.</title>
        <authorList>
            <person name="Li X."/>
            <person name="Gerber S.A."/>
            <person name="Rudner A.D."/>
            <person name="Beausoleil S.A."/>
            <person name="Haas W."/>
            <person name="Villen J."/>
            <person name="Elias J.E."/>
            <person name="Gygi S.P."/>
        </authorList>
    </citation>
    <scope>PHOSPHORYLATION [LARGE SCALE ANALYSIS] AT SER-14 AND SER-528</scope>
    <scope>IDENTIFICATION BY MASS SPECTROMETRY [LARGE SCALE ANALYSIS]</scope>
    <source>
        <strain>ADR376</strain>
    </source>
</reference>
<reference key="30">
    <citation type="journal article" date="2007" name="Mol. Cell">
        <title>Multistep disulfide bond formation in Yap1 is required for sensing and transduction of H2O2 stress signal.</title>
        <authorList>
            <person name="Okazaki S."/>
            <person name="Tachibana T."/>
            <person name="Naganuma A."/>
            <person name="Mano N."/>
            <person name="Kuge S."/>
        </authorList>
    </citation>
    <scope>DISULFIDE BONDS</scope>
</reference>
<reference key="31">
    <citation type="journal article" date="2007" name="Proc. Natl. Acad. Sci. U.S.A.">
        <title>Analysis of phosphorylation sites on proteins from Saccharomyces cerevisiae by electron transfer dissociation (ETD) mass spectrometry.</title>
        <authorList>
            <person name="Chi A."/>
            <person name="Huttenhower C."/>
            <person name="Geer L.Y."/>
            <person name="Coon J.J."/>
            <person name="Syka J.E.P."/>
            <person name="Bai D.L."/>
            <person name="Shabanowitz J."/>
            <person name="Burke D.J."/>
            <person name="Troyanskaya O.G."/>
            <person name="Hunt D.F."/>
        </authorList>
    </citation>
    <scope>IDENTIFICATION BY MASS SPECTROMETRY [LARGE SCALE ANALYSIS]</scope>
</reference>
<reference key="32">
    <citation type="journal article" date="2008" name="Mol. Cell. Proteomics">
        <title>A multidimensional chromatography technology for in-depth phosphoproteome analysis.</title>
        <authorList>
            <person name="Albuquerque C.P."/>
            <person name="Smolka M.B."/>
            <person name="Payne S.H."/>
            <person name="Bafna V."/>
            <person name="Eng J."/>
            <person name="Zhou H."/>
        </authorList>
    </citation>
    <scope>PHOSPHORYLATION [LARGE SCALE ANALYSIS] AT SER-372 AND SER-528</scope>
    <scope>IDENTIFICATION BY MASS SPECTROMETRY [LARGE SCALE ANALYSIS]</scope>
</reference>
<reference key="33">
    <citation type="journal article" date="2009" name="Eukaryot. Cell">
        <title>Saccharomyces cerevisiae Rbg1 protein and its binding partner Gir2 interact on polyribosomes with Gcn1.</title>
        <authorList>
            <person name="Wout P.K."/>
            <person name="Sattlegger E."/>
            <person name="Sullivan S.M."/>
            <person name="Maddock J.R."/>
        </authorList>
    </citation>
    <scope>INTERACTION WITH RBG1</scope>
</reference>
<reference key="34">
    <citation type="journal article" date="2009" name="Science">
        <title>Global analysis of Cdk1 substrate phosphorylation sites provides insights into evolution.</title>
        <authorList>
            <person name="Holt L.J."/>
            <person name="Tuch B.B."/>
            <person name="Villen J."/>
            <person name="Johnson A.D."/>
            <person name="Gygi S.P."/>
            <person name="Morgan D.O."/>
        </authorList>
    </citation>
    <scope>PHOSPHORYLATION [LARGE SCALE ANALYSIS] AT SER-9; SER-14; SER-17; THR-165; SER-204 AND SER-528</scope>
    <scope>IDENTIFICATION BY MASS SPECTROMETRY [LARGE SCALE ANALYSIS]</scope>
</reference>
<reference key="35">
    <citation type="journal article" date="2011" name="Free Radic. Biol. Med.">
        <title>Yap1 activation by H2O2 or thiol-reactive chemicals elicits distinct adaptive gene responses.</title>
        <authorList>
            <person name="Ouyang X."/>
            <person name="Tran Q.T."/>
            <person name="Goodwin S."/>
            <person name="Wible R.S."/>
            <person name="Sutter C.H."/>
            <person name="Sutter T.R."/>
        </authorList>
    </citation>
    <scope>FUNCTION</scope>
</reference>
<reference evidence="38" key="36">
    <citation type="journal article" date="2004" name="Nature">
        <title>Structural basis for redox regulation of Yap1 transcription factor localization.</title>
        <authorList>
            <person name="Wood M.J."/>
            <person name="Storz G."/>
            <person name="Tjandra N."/>
        </authorList>
    </citation>
    <scope>STRUCTURE BY NMR OF 279-313 AND 565-650</scope>
    <scope>DISULFIDE BONDS</scope>
</reference>
<organism>
    <name type="scientific">Saccharomyces cerevisiae (strain ATCC 204508 / S288c)</name>
    <name type="common">Baker's yeast</name>
    <dbReference type="NCBI Taxonomy" id="559292"/>
    <lineage>
        <taxon>Eukaryota</taxon>
        <taxon>Fungi</taxon>
        <taxon>Dikarya</taxon>
        <taxon>Ascomycota</taxon>
        <taxon>Saccharomycotina</taxon>
        <taxon>Saccharomycetes</taxon>
        <taxon>Saccharomycetales</taxon>
        <taxon>Saccharomycetaceae</taxon>
        <taxon>Saccharomyces</taxon>
    </lineage>
</organism>
<proteinExistence type="evidence at protein level"/>
<evidence type="ECO:0000250" key="1"/>
<evidence type="ECO:0000255" key="2">
    <source>
        <dbReference type="PROSITE-ProRule" id="PRU00768"/>
    </source>
</evidence>
<evidence type="ECO:0000255" key="3">
    <source>
        <dbReference type="PROSITE-ProRule" id="PRU00978"/>
    </source>
</evidence>
<evidence type="ECO:0000256" key="4">
    <source>
        <dbReference type="SAM" id="MobiDB-lite"/>
    </source>
</evidence>
<evidence type="ECO:0000269" key="5">
    <source>
    </source>
</evidence>
<evidence type="ECO:0000269" key="6">
    <source>
    </source>
</evidence>
<evidence type="ECO:0000269" key="7">
    <source>
    </source>
</evidence>
<evidence type="ECO:0000269" key="8">
    <source>
    </source>
</evidence>
<evidence type="ECO:0000269" key="9">
    <source>
    </source>
</evidence>
<evidence type="ECO:0000269" key="10">
    <source>
    </source>
</evidence>
<evidence type="ECO:0000269" key="11">
    <source>
    </source>
</evidence>
<evidence type="ECO:0000269" key="12">
    <source>
    </source>
</evidence>
<evidence type="ECO:0000269" key="13">
    <source>
    </source>
</evidence>
<evidence type="ECO:0000269" key="14">
    <source>
    </source>
</evidence>
<evidence type="ECO:0000269" key="15">
    <source>
    </source>
</evidence>
<evidence type="ECO:0000269" key="16">
    <source>
    </source>
</evidence>
<evidence type="ECO:0000269" key="17">
    <source>
    </source>
</evidence>
<evidence type="ECO:0000269" key="18">
    <source>
    </source>
</evidence>
<evidence type="ECO:0000269" key="19">
    <source>
    </source>
</evidence>
<evidence type="ECO:0000269" key="20">
    <source>
    </source>
</evidence>
<evidence type="ECO:0000269" key="21">
    <source>
    </source>
</evidence>
<evidence type="ECO:0000269" key="22">
    <source>
    </source>
</evidence>
<evidence type="ECO:0000269" key="23">
    <source>
    </source>
</evidence>
<evidence type="ECO:0000269" key="24">
    <source>
    </source>
</evidence>
<evidence type="ECO:0000269" key="25">
    <source>
    </source>
</evidence>
<evidence type="ECO:0000269" key="26">
    <source>
    </source>
</evidence>
<evidence type="ECO:0000269" key="27">
    <source>
    </source>
</evidence>
<evidence type="ECO:0000303" key="28">
    <source>
    </source>
</evidence>
<evidence type="ECO:0000303" key="29">
    <source>
    </source>
</evidence>
<evidence type="ECO:0000303" key="30">
    <source>
    </source>
</evidence>
<evidence type="ECO:0000303" key="31">
    <source>
    </source>
</evidence>
<evidence type="ECO:0000305" key="32"/>
<evidence type="ECO:0000305" key="33">
    <source>
    </source>
</evidence>
<evidence type="ECO:0000305" key="34">
    <source>
    </source>
</evidence>
<evidence type="ECO:0000305" key="35">
    <source>
    </source>
</evidence>
<evidence type="ECO:0000305" key="36">
    <source>
    </source>
</evidence>
<evidence type="ECO:0000312" key="37">
    <source>
        <dbReference type="SGD" id="S000004466"/>
    </source>
</evidence>
<evidence type="ECO:0007744" key="38">
    <source>
        <dbReference type="PDB" id="1SSE"/>
    </source>
</evidence>
<evidence type="ECO:0007744" key="39">
    <source>
    </source>
</evidence>
<evidence type="ECO:0007744" key="40">
    <source>
    </source>
</evidence>
<evidence type="ECO:0007744" key="41">
    <source>
    </source>
</evidence>
<evidence type="ECO:0007744" key="42">
    <source>
    </source>
</evidence>
<evidence type="ECO:0007829" key="43">
    <source>
        <dbReference type="PDB" id="1SSE"/>
    </source>
</evidence>
<name>AP1_YEAST</name>
<dbReference type="EMBL" id="X58693">
    <property type="protein sequence ID" value="CAA41536.1"/>
    <property type="molecule type" value="Genomic_DNA"/>
</dbReference>
<dbReference type="EMBL" id="X53830">
    <property type="protein sequence ID" value="CAA37827.1"/>
    <property type="status" value="ALT_FRAME"/>
    <property type="molecule type" value="Genomic_DNA"/>
</dbReference>
<dbReference type="EMBL" id="X60780">
    <property type="protein sequence ID" value="CAA43195.1"/>
    <property type="molecule type" value="Genomic_DNA"/>
</dbReference>
<dbReference type="EMBL" id="X63268">
    <property type="protein sequence ID" value="CAA44917.1"/>
    <property type="molecule type" value="Genomic_DNA"/>
</dbReference>
<dbReference type="EMBL" id="Z49810">
    <property type="protein sequence ID" value="CAA89945.1"/>
    <property type="molecule type" value="Genomic_DNA"/>
</dbReference>
<dbReference type="EMBL" id="BK006946">
    <property type="protein sequence ID" value="DAA09892.1"/>
    <property type="molecule type" value="Genomic_DNA"/>
</dbReference>
<dbReference type="PIR" id="S16706">
    <property type="entry name" value="S16706"/>
</dbReference>
<dbReference type="RefSeq" id="NP_013707.1">
    <property type="nucleotide sequence ID" value="NM_001182362.1"/>
</dbReference>
<dbReference type="PDB" id="1SSE">
    <property type="method" value="NMR"/>
    <property type="chains" value="A=279-313, B=565-650"/>
</dbReference>
<dbReference type="PDBsum" id="1SSE"/>
<dbReference type="SMR" id="P19880"/>
<dbReference type="BioGRID" id="35163">
    <property type="interactions" value="274"/>
</dbReference>
<dbReference type="DIP" id="DIP-1752N"/>
<dbReference type="FunCoup" id="P19880">
    <property type="interactions" value="5522"/>
</dbReference>
<dbReference type="IntAct" id="P19880">
    <property type="interactions" value="40"/>
</dbReference>
<dbReference type="MINT" id="P19880"/>
<dbReference type="STRING" id="4932.YML007W"/>
<dbReference type="iPTMnet" id="P19880"/>
<dbReference type="PaxDb" id="4932-YML007W"/>
<dbReference type="PeptideAtlas" id="P19880"/>
<dbReference type="EnsemblFungi" id="YML007W_mRNA">
    <property type="protein sequence ID" value="YML007W"/>
    <property type="gene ID" value="YML007W"/>
</dbReference>
<dbReference type="GeneID" id="855005"/>
<dbReference type="KEGG" id="sce:YML007W"/>
<dbReference type="AGR" id="SGD:S000004466"/>
<dbReference type="SGD" id="S000004466">
    <property type="gene designation" value="YAP1"/>
</dbReference>
<dbReference type="VEuPathDB" id="FungiDB:YML007W"/>
<dbReference type="eggNOG" id="ENOG502RPD7">
    <property type="taxonomic scope" value="Eukaryota"/>
</dbReference>
<dbReference type="GeneTree" id="ENSGT00940000176699"/>
<dbReference type="HOGENOM" id="CLU_032750_0_0_1"/>
<dbReference type="InParanoid" id="P19880"/>
<dbReference type="OMA" id="WESHSNI"/>
<dbReference type="OrthoDB" id="5380163at2759"/>
<dbReference type="BioCyc" id="YEAST:G3O-32612-MONOMER"/>
<dbReference type="BioGRID-ORCS" id="855005">
    <property type="hits" value="6 hits in 13 CRISPR screens"/>
</dbReference>
<dbReference type="EvolutionaryTrace" id="P19880"/>
<dbReference type="PHI-base" id="PHI:2811"/>
<dbReference type="PRO" id="PR:P19880"/>
<dbReference type="Proteomes" id="UP000002311">
    <property type="component" value="Chromosome XIII"/>
</dbReference>
<dbReference type="RNAct" id="P19880">
    <property type="molecule type" value="protein"/>
</dbReference>
<dbReference type="GO" id="GO:0005737">
    <property type="term" value="C:cytoplasm"/>
    <property type="evidence" value="ECO:0000314"/>
    <property type="project" value="SGD"/>
</dbReference>
<dbReference type="GO" id="GO:0005634">
    <property type="term" value="C:nucleus"/>
    <property type="evidence" value="ECO:0000314"/>
    <property type="project" value="SGD"/>
</dbReference>
<dbReference type="GO" id="GO:0090575">
    <property type="term" value="C:RNA polymerase II transcription regulator complex"/>
    <property type="evidence" value="ECO:0000318"/>
    <property type="project" value="GO_Central"/>
</dbReference>
<dbReference type="GO" id="GO:0001228">
    <property type="term" value="F:DNA-binding transcription activator activity, RNA polymerase II-specific"/>
    <property type="evidence" value="ECO:0000318"/>
    <property type="project" value="GO_Central"/>
</dbReference>
<dbReference type="GO" id="GO:0003700">
    <property type="term" value="F:DNA-binding transcription factor activity"/>
    <property type="evidence" value="ECO:0000314"/>
    <property type="project" value="SGD"/>
</dbReference>
<dbReference type="GO" id="GO:0060090">
    <property type="term" value="F:molecular adaptor activity"/>
    <property type="evidence" value="ECO:0000269"/>
    <property type="project" value="DisProt"/>
</dbReference>
<dbReference type="GO" id="GO:0000976">
    <property type="term" value="F:transcription cis-regulatory region binding"/>
    <property type="evidence" value="ECO:0000318"/>
    <property type="project" value="GO_Central"/>
</dbReference>
<dbReference type="GO" id="GO:0034599">
    <property type="term" value="P:cellular response to oxidative stress"/>
    <property type="evidence" value="ECO:0000314"/>
    <property type="project" value="SGD"/>
</dbReference>
<dbReference type="GO" id="GO:0045944">
    <property type="term" value="P:positive regulation of transcription by RNA polymerase II"/>
    <property type="evidence" value="ECO:0007001"/>
    <property type="project" value="SGD"/>
</dbReference>
<dbReference type="GO" id="GO:1900101">
    <property type="term" value="P:regulation of endoplasmic reticulum unfolded protein response"/>
    <property type="evidence" value="ECO:0000315"/>
    <property type="project" value="SGD"/>
</dbReference>
<dbReference type="GO" id="GO:0006357">
    <property type="term" value="P:regulation of transcription by RNA polymerase II"/>
    <property type="evidence" value="ECO:0000314"/>
    <property type="project" value="SGD"/>
</dbReference>
<dbReference type="GO" id="GO:0046685">
    <property type="term" value="P:response to arsenic-containing substance"/>
    <property type="evidence" value="ECO:0007001"/>
    <property type="project" value="SGD"/>
</dbReference>
<dbReference type="GO" id="GO:0046686">
    <property type="term" value="P:response to cadmium ion"/>
    <property type="evidence" value="ECO:0007669"/>
    <property type="project" value="UniProtKB-KW"/>
</dbReference>
<dbReference type="GO" id="GO:0009408">
    <property type="term" value="P:response to heat"/>
    <property type="evidence" value="ECO:0000315"/>
    <property type="project" value="SGD"/>
</dbReference>
<dbReference type="GO" id="GO:0000304">
    <property type="term" value="P:response to singlet oxygen"/>
    <property type="evidence" value="ECO:0000315"/>
    <property type="project" value="SGD"/>
</dbReference>
<dbReference type="CDD" id="cd14688">
    <property type="entry name" value="bZIP_YAP"/>
    <property type="match status" value="1"/>
</dbReference>
<dbReference type="DisProt" id="DP01584"/>
<dbReference type="FunFam" id="1.10.238.100:FF:000002">
    <property type="entry name" value="AP-1-like transcription factor"/>
    <property type="match status" value="1"/>
</dbReference>
<dbReference type="FunFam" id="1.20.5.170:FF:000067">
    <property type="entry name" value="BZIP transcription factor"/>
    <property type="match status" value="1"/>
</dbReference>
<dbReference type="Gene3D" id="1.20.5.170">
    <property type="match status" value="1"/>
</dbReference>
<dbReference type="Gene3D" id="1.10.238.100">
    <property type="entry name" value="YAP1 redox domain. Chain B"/>
    <property type="match status" value="1"/>
</dbReference>
<dbReference type="InterPro" id="IPR050936">
    <property type="entry name" value="AP-1-like"/>
</dbReference>
<dbReference type="InterPro" id="IPR004827">
    <property type="entry name" value="bZIP"/>
</dbReference>
<dbReference type="InterPro" id="IPR046347">
    <property type="entry name" value="bZIP_sf"/>
</dbReference>
<dbReference type="InterPro" id="IPR013910">
    <property type="entry name" value="TF_PAP1"/>
</dbReference>
<dbReference type="InterPro" id="IPR023167">
    <property type="entry name" value="Yap1_redox_dom_sf"/>
</dbReference>
<dbReference type="PANTHER" id="PTHR40621:SF6">
    <property type="entry name" value="AP-1-LIKE TRANSCRIPTION FACTOR YAP1-RELATED"/>
    <property type="match status" value="1"/>
</dbReference>
<dbReference type="PANTHER" id="PTHR40621">
    <property type="entry name" value="TRANSCRIPTION FACTOR KAPC-RELATED"/>
    <property type="match status" value="1"/>
</dbReference>
<dbReference type="Pfam" id="PF00170">
    <property type="entry name" value="bZIP_1"/>
    <property type="match status" value="1"/>
</dbReference>
<dbReference type="Pfam" id="PF08601">
    <property type="entry name" value="PAP1"/>
    <property type="match status" value="1"/>
</dbReference>
<dbReference type="SMART" id="SM00338">
    <property type="entry name" value="BRLZ"/>
    <property type="match status" value="1"/>
</dbReference>
<dbReference type="SUPFAM" id="SSF57959">
    <property type="entry name" value="Leucine zipper domain"/>
    <property type="match status" value="1"/>
</dbReference>
<dbReference type="SUPFAM" id="SSF111430">
    <property type="entry name" value="YAP1 redox domain"/>
    <property type="match status" value="1"/>
</dbReference>
<dbReference type="PROSITE" id="PS50217">
    <property type="entry name" value="BZIP"/>
    <property type="match status" value="1"/>
</dbReference>
<dbReference type="PROSITE" id="PS00036">
    <property type="entry name" value="BZIP_BASIC"/>
    <property type="match status" value="1"/>
</dbReference>
<accession>P19880</accession>
<accession>D6VZG8</accession>
<accession>P22631</accession>
<accession>Q06840</accession>
<sequence>MSVSTAKRSLDVVSPGSLAEFEGSKSRHDEIENEHRRTGTRDGEDSEQPKKKGSKTSKKQDLDPETKQKRTAQNRAAQRAFRERKERKMKELEKKVQSLESIQQQNEVEATFLRDQLITLVNELKKYRPETRNDSKVLEYLARRDPNLHFSKNNVNHSNSEPIDTPNDDIQENVKQKMNFTFQYPLDNDNDNDNSKNVGKQLPSPNDPSHSAPMPINQTQKKLSDATDSSSATLDSLSNSNDVLNNTPNSSTSMDWLDNVIYTNRFVSGDDGSNSKTKNLDSNMFSNDFNFENQFDEQVSEFCSKMNQVCGTRQCPIPKKPISALDKEVFASSSILSSNSPALTNTWESHSNITDNTPANVIATDATKYENSFSGFGRLGFDMSANHYVVNDNSTGSTDSTGSTGNKNKKNNNNSDDVLPFISESPFDMNQVTNFFSPGSTGIGNNAASNTNPSLLQSSKEDIPFINANLAFPDDNSTNIQLQPFSESQSQNKFDYDMFFRDSSKEGNNLFGEFLEDDDDDKKAANMSDDESSLIKNQLINEEPELPKQYLQSVPGNESEISQKNGSSLQNADKINNGNDNDNDNDVVPSKEGSLLRCSEIWDRITTHPKYSDIDVDGLCSELMAKAKCSERGVVINAEDVQLALNKHMN</sequence>
<gene>
    <name evidence="31" type="primary">YAP1</name>
    <name evidence="29" type="synonym">PAR1</name>
    <name evidence="30" type="synonym">PDR4</name>
    <name evidence="28" type="synonym">SNQ3</name>
    <name evidence="37" type="ordered locus">YML007W</name>
    <name type="ORF">YM9571.12</name>
</gene>